<accession>Q6FJ19</accession>
<evidence type="ECO:0000250" key="1"/>
<evidence type="ECO:0000305" key="2"/>
<comment type="function">
    <text evidence="1">Component of the biogenesis of lysosome-related organelles complex-1 (BLOC-1), a complex involved in endosomal cargo sorting.</text>
</comment>
<comment type="subunit">
    <text evidence="1">Component of the biogenesis of lysosome-related organelles complex-1 (BLOC-1).</text>
</comment>
<comment type="subcellular location">
    <subcellularLocation>
        <location evidence="1">Endosome</location>
    </subcellularLocation>
</comment>
<comment type="similarity">
    <text evidence="2">Belongs to the BLOC1S1 family.</text>
</comment>
<keyword id="KW-0967">Endosome</keyword>
<keyword id="KW-1185">Reference proteome</keyword>
<keyword id="KW-0813">Transport</keyword>
<dbReference type="EMBL" id="CR380959">
    <property type="protein sequence ID" value="CAG62753.1"/>
    <property type="molecule type" value="Genomic_DNA"/>
</dbReference>
<dbReference type="RefSeq" id="XP_449775.1">
    <property type="nucleotide sequence ID" value="XM_449775.1"/>
</dbReference>
<dbReference type="SMR" id="Q6FJ19"/>
<dbReference type="FunCoup" id="Q6FJ19">
    <property type="interactions" value="23"/>
</dbReference>
<dbReference type="STRING" id="284593.Q6FJ19"/>
<dbReference type="EnsemblFungi" id="CAGL0M09867g-T">
    <property type="protein sequence ID" value="CAGL0M09867g-T-p1"/>
    <property type="gene ID" value="CAGL0M09867g"/>
</dbReference>
<dbReference type="KEGG" id="cgr:2891339"/>
<dbReference type="CGD" id="CAL0136365">
    <property type="gene designation" value="CAGL0M09867g"/>
</dbReference>
<dbReference type="VEuPathDB" id="FungiDB:B1J91_M09867g"/>
<dbReference type="VEuPathDB" id="FungiDB:CAGL0M09867g"/>
<dbReference type="eggNOG" id="ENOG502S787">
    <property type="taxonomic scope" value="Eukaryota"/>
</dbReference>
<dbReference type="HOGENOM" id="CLU_150164_0_0_1"/>
<dbReference type="InParanoid" id="Q6FJ19"/>
<dbReference type="OMA" id="IEANHAY"/>
<dbReference type="Proteomes" id="UP000002428">
    <property type="component" value="Chromosome M"/>
</dbReference>
<dbReference type="GO" id="GO:0031083">
    <property type="term" value="C:BLOC-1 complex"/>
    <property type="evidence" value="ECO:0007669"/>
    <property type="project" value="EnsemblFungi"/>
</dbReference>
<dbReference type="GO" id="GO:0005768">
    <property type="term" value="C:endosome"/>
    <property type="evidence" value="ECO:0007669"/>
    <property type="project" value="UniProtKB-SubCell"/>
</dbReference>
<dbReference type="GO" id="GO:0007032">
    <property type="term" value="P:endosome organization"/>
    <property type="evidence" value="ECO:0007669"/>
    <property type="project" value="EnsemblFungi"/>
</dbReference>
<dbReference type="GO" id="GO:0032880">
    <property type="term" value="P:regulation of protein localization"/>
    <property type="evidence" value="ECO:0007669"/>
    <property type="project" value="EnsemblFungi"/>
</dbReference>
<name>BL1S1_CANGA</name>
<gene>
    <name type="primary">BLS1</name>
    <name type="ordered locus">CAGL0M09867g</name>
</gene>
<protein>
    <recommendedName>
        <fullName>Biogenesis of lysosome-related organelles complex 1 subunit BLS1</fullName>
        <shortName>BLOC-1 subunit BLS1</shortName>
    </recommendedName>
    <alternativeName>
        <fullName>BLOS1-homolog</fullName>
    </alternativeName>
</protein>
<feature type="chain" id="PRO_0000410629" description="Biogenesis of lysosome-related organelles complex 1 subunit BLS1">
    <location>
        <begin position="1"/>
        <end position="106"/>
    </location>
</feature>
<proteinExistence type="inferred from homology"/>
<organism>
    <name type="scientific">Candida glabrata (strain ATCC 2001 / BCRC 20586 / JCM 3761 / NBRC 0622 / NRRL Y-65 / CBS 138)</name>
    <name type="common">Yeast</name>
    <name type="synonym">Nakaseomyces glabratus</name>
    <dbReference type="NCBI Taxonomy" id="284593"/>
    <lineage>
        <taxon>Eukaryota</taxon>
        <taxon>Fungi</taxon>
        <taxon>Dikarya</taxon>
        <taxon>Ascomycota</taxon>
        <taxon>Saccharomycotina</taxon>
        <taxon>Saccharomycetes</taxon>
        <taxon>Saccharomycetales</taxon>
        <taxon>Saccharomycetaceae</taxon>
        <taxon>Nakaseomyces</taxon>
    </lineage>
</organism>
<sequence>MPPSTELDALVDKIVNDHSLSEPGQSLKELGDNGKYIMDVQMKKLLKLHDQSFIERCFTPMEELKNRYAKVKERSGDLQKEAELVDRDIRIIEMAIQDINKNKSHQ</sequence>
<reference key="1">
    <citation type="journal article" date="2004" name="Nature">
        <title>Genome evolution in yeasts.</title>
        <authorList>
            <person name="Dujon B."/>
            <person name="Sherman D."/>
            <person name="Fischer G."/>
            <person name="Durrens P."/>
            <person name="Casaregola S."/>
            <person name="Lafontaine I."/>
            <person name="de Montigny J."/>
            <person name="Marck C."/>
            <person name="Neuveglise C."/>
            <person name="Talla E."/>
            <person name="Goffard N."/>
            <person name="Frangeul L."/>
            <person name="Aigle M."/>
            <person name="Anthouard V."/>
            <person name="Babour A."/>
            <person name="Barbe V."/>
            <person name="Barnay S."/>
            <person name="Blanchin S."/>
            <person name="Beckerich J.-M."/>
            <person name="Beyne E."/>
            <person name="Bleykasten C."/>
            <person name="Boisrame A."/>
            <person name="Boyer J."/>
            <person name="Cattolico L."/>
            <person name="Confanioleri F."/>
            <person name="de Daruvar A."/>
            <person name="Despons L."/>
            <person name="Fabre E."/>
            <person name="Fairhead C."/>
            <person name="Ferry-Dumazet H."/>
            <person name="Groppi A."/>
            <person name="Hantraye F."/>
            <person name="Hennequin C."/>
            <person name="Jauniaux N."/>
            <person name="Joyet P."/>
            <person name="Kachouri R."/>
            <person name="Kerrest A."/>
            <person name="Koszul R."/>
            <person name="Lemaire M."/>
            <person name="Lesur I."/>
            <person name="Ma L."/>
            <person name="Muller H."/>
            <person name="Nicaud J.-M."/>
            <person name="Nikolski M."/>
            <person name="Oztas S."/>
            <person name="Ozier-Kalogeropoulos O."/>
            <person name="Pellenz S."/>
            <person name="Potier S."/>
            <person name="Richard G.-F."/>
            <person name="Straub M.-L."/>
            <person name="Suleau A."/>
            <person name="Swennen D."/>
            <person name="Tekaia F."/>
            <person name="Wesolowski-Louvel M."/>
            <person name="Westhof E."/>
            <person name="Wirth B."/>
            <person name="Zeniou-Meyer M."/>
            <person name="Zivanovic Y."/>
            <person name="Bolotin-Fukuhara M."/>
            <person name="Thierry A."/>
            <person name="Bouchier C."/>
            <person name="Caudron B."/>
            <person name="Scarpelli C."/>
            <person name="Gaillardin C."/>
            <person name="Weissenbach J."/>
            <person name="Wincker P."/>
            <person name="Souciet J.-L."/>
        </authorList>
    </citation>
    <scope>NUCLEOTIDE SEQUENCE [LARGE SCALE GENOMIC DNA]</scope>
    <source>
        <strain>ATCC 2001 / BCRC 20586 / JCM 3761 / NBRC 0622 / NRRL Y-65 / CBS 138</strain>
    </source>
</reference>